<proteinExistence type="evidence at protein level"/>
<protein>
    <recommendedName>
        <fullName evidence="13">Histone acetyltransferase of the MYST family 2</fullName>
        <ecNumber evidence="5">2.3.1.48</ecNumber>
    </recommendedName>
    <alternativeName>
        <fullName evidence="12">Histone acetyltransferase of the GNAT/MYST superfamily 5</fullName>
    </alternativeName>
    <alternativeName>
        <fullName evidence="13">MYST-like histone acetyltransferase 2</fullName>
    </alternativeName>
</protein>
<organism>
    <name type="scientific">Arabidopsis thaliana</name>
    <name type="common">Mouse-ear cress</name>
    <dbReference type="NCBI Taxonomy" id="3702"/>
    <lineage>
        <taxon>Eukaryota</taxon>
        <taxon>Viridiplantae</taxon>
        <taxon>Streptophyta</taxon>
        <taxon>Embryophyta</taxon>
        <taxon>Tracheophyta</taxon>
        <taxon>Spermatophyta</taxon>
        <taxon>Magnoliopsida</taxon>
        <taxon>eudicotyledons</taxon>
        <taxon>Gunneridae</taxon>
        <taxon>Pentapetalae</taxon>
        <taxon>rosids</taxon>
        <taxon>malvids</taxon>
        <taxon>Brassicales</taxon>
        <taxon>Brassicaceae</taxon>
        <taxon>Camelineae</taxon>
        <taxon>Arabidopsis</taxon>
    </lineage>
</organism>
<feature type="chain" id="PRO_0000238465" description="Histone acetyltransferase of the MYST family 2">
    <location>
        <begin position="1"/>
        <end position="445"/>
    </location>
</feature>
<feature type="domain" description="Tudor-knot" evidence="2">
    <location>
        <begin position="60"/>
        <end position="118"/>
    </location>
</feature>
<feature type="domain" description="MYST-type HAT" evidence="3">
    <location>
        <begin position="169"/>
        <end position="440"/>
    </location>
</feature>
<feature type="zinc finger region" description="C2HC MYST-type" evidence="3">
    <location>
        <begin position="202"/>
        <end position="227"/>
    </location>
</feature>
<feature type="region of interest" description="Disordered" evidence="4">
    <location>
        <begin position="1"/>
        <end position="58"/>
    </location>
</feature>
<feature type="compositionally biased region" description="Polar residues" evidence="4">
    <location>
        <begin position="1"/>
        <end position="23"/>
    </location>
</feature>
<feature type="active site" description="Proton donor/acceptor" evidence="1">
    <location>
        <position position="345"/>
    </location>
</feature>
<feature type="binding site" evidence="1">
    <location>
        <begin position="312"/>
        <end position="314"/>
    </location>
    <ligand>
        <name>acetyl-CoA</name>
        <dbReference type="ChEBI" id="CHEBI:57288"/>
    </ligand>
</feature>
<feature type="binding site" evidence="1">
    <location>
        <begin position="319"/>
        <end position="325"/>
    </location>
    <ligand>
        <name>acetyl-CoA</name>
        <dbReference type="ChEBI" id="CHEBI:57288"/>
    </ligand>
</feature>
<feature type="binding site" evidence="1">
    <location>
        <position position="349"/>
    </location>
    <ligand>
        <name>acetyl-CoA</name>
        <dbReference type="ChEBI" id="CHEBI:57288"/>
    </ligand>
</feature>
<feature type="modified residue" description="N6-acetyllysine; by autocatalysis" evidence="1">
    <location>
        <position position="269"/>
    </location>
</feature>
<feature type="splice variant" id="VSP_018609" description="In isoform 2." evidence="11">
    <original>S</original>
    <variation>N</variation>
    <location>
        <position position="135"/>
    </location>
</feature>
<feature type="splice variant" id="VSP_018610" description="In isoform 2." evidence="11">
    <location>
        <begin position="172"/>
        <end position="249"/>
    </location>
</feature>
<feature type="sequence conflict" description="In Ref. 5; AAM63720." evidence="14" ref="5">
    <original>V</original>
    <variation>L</variation>
    <location>
        <position position="129"/>
    </location>
</feature>
<accession>Q9LXD7</accession>
<accession>C0SVP1</accession>
<accession>F4KE11</accession>
<accession>Q8GZ97</accession>
<accession>Q8LCD4</accession>
<dbReference type="EC" id="2.3.1.48" evidence="5"/>
<dbReference type="EMBL" id="AL353994">
    <property type="protein sequence ID" value="CAB89356.1"/>
    <property type="molecule type" value="Genomic_DNA"/>
</dbReference>
<dbReference type="EMBL" id="AB020752">
    <property type="protein sequence ID" value="BAB09532.1"/>
    <property type="molecule type" value="Genomic_DNA"/>
</dbReference>
<dbReference type="EMBL" id="CP002688">
    <property type="protein sequence ID" value="AED91440.1"/>
    <property type="molecule type" value="Genomic_DNA"/>
</dbReference>
<dbReference type="EMBL" id="CP002688">
    <property type="protein sequence ID" value="AED91441.1"/>
    <property type="molecule type" value="Genomic_DNA"/>
</dbReference>
<dbReference type="EMBL" id="AK117126">
    <property type="protein sequence ID" value="BAC41804.1"/>
    <property type="molecule type" value="mRNA"/>
</dbReference>
<dbReference type="EMBL" id="AY086663">
    <property type="protein sequence ID" value="AAM63720.1"/>
    <property type="molecule type" value="mRNA"/>
</dbReference>
<dbReference type="EMBL" id="AB493744">
    <property type="protein sequence ID" value="BAH30582.1"/>
    <property type="molecule type" value="mRNA"/>
</dbReference>
<dbReference type="PIR" id="T49924">
    <property type="entry name" value="T49924"/>
</dbReference>
<dbReference type="RefSeq" id="NP_001078558.1">
    <property type="nucleotide sequence ID" value="NM_001085089.1"/>
</dbReference>
<dbReference type="RefSeq" id="NP_196536.1">
    <molecule id="Q9LXD7-1"/>
    <property type="nucleotide sequence ID" value="NM_121011.4"/>
</dbReference>
<dbReference type="SMR" id="Q9LXD7"/>
<dbReference type="BioGRID" id="16112">
    <property type="interactions" value="2"/>
</dbReference>
<dbReference type="FunCoup" id="Q9LXD7">
    <property type="interactions" value="4619"/>
</dbReference>
<dbReference type="STRING" id="3702.Q9LXD7"/>
<dbReference type="PaxDb" id="3702-AT5G09740.1"/>
<dbReference type="ProteomicsDB" id="251309">
    <molecule id="Q9LXD7-1"/>
</dbReference>
<dbReference type="EnsemblPlants" id="AT5G09740.1">
    <molecule id="Q9LXD7-1"/>
    <property type="protein sequence ID" value="AT5G09740.1"/>
    <property type="gene ID" value="AT5G09740"/>
</dbReference>
<dbReference type="GeneID" id="830834"/>
<dbReference type="Gramene" id="AT5G09740.1">
    <molecule id="Q9LXD7-1"/>
    <property type="protein sequence ID" value="AT5G09740.1"/>
    <property type="gene ID" value="AT5G09740"/>
</dbReference>
<dbReference type="KEGG" id="ath:AT5G09740"/>
<dbReference type="Araport" id="AT5G09740"/>
<dbReference type="TAIR" id="AT5G09740">
    <property type="gene designation" value="HAM2"/>
</dbReference>
<dbReference type="eggNOG" id="KOG2747">
    <property type="taxonomic scope" value="Eukaryota"/>
</dbReference>
<dbReference type="HOGENOM" id="CLU_011815_2_1_1"/>
<dbReference type="InParanoid" id="Q9LXD7"/>
<dbReference type="OMA" id="DSPEGNN"/>
<dbReference type="OrthoDB" id="787137at2759"/>
<dbReference type="PhylomeDB" id="Q9LXD7"/>
<dbReference type="BRENDA" id="2.3.1.48">
    <property type="organism ID" value="399"/>
</dbReference>
<dbReference type="PRO" id="PR:Q9LXD7"/>
<dbReference type="Proteomes" id="UP000006548">
    <property type="component" value="Chromosome 5"/>
</dbReference>
<dbReference type="ExpressionAtlas" id="Q9LXD7">
    <property type="expression patterns" value="baseline and differential"/>
</dbReference>
<dbReference type="GO" id="GO:0005634">
    <property type="term" value="C:nucleus"/>
    <property type="evidence" value="ECO:0000314"/>
    <property type="project" value="TAIR"/>
</dbReference>
<dbReference type="GO" id="GO:0004402">
    <property type="term" value="F:histone acetyltransferase activity"/>
    <property type="evidence" value="ECO:0000314"/>
    <property type="project" value="TAIR"/>
</dbReference>
<dbReference type="GO" id="GO:0008270">
    <property type="term" value="F:zinc ion binding"/>
    <property type="evidence" value="ECO:0007669"/>
    <property type="project" value="UniProtKB-KW"/>
</dbReference>
<dbReference type="GO" id="GO:0006281">
    <property type="term" value="P:DNA repair"/>
    <property type="evidence" value="ECO:0000315"/>
    <property type="project" value="TAIR"/>
</dbReference>
<dbReference type="GO" id="GO:0006355">
    <property type="term" value="P:regulation of DNA-templated transcription"/>
    <property type="evidence" value="ECO:0007669"/>
    <property type="project" value="InterPro"/>
</dbReference>
<dbReference type="GO" id="GO:0010224">
    <property type="term" value="P:response to UV-B"/>
    <property type="evidence" value="ECO:0000270"/>
    <property type="project" value="TAIR"/>
</dbReference>
<dbReference type="CDD" id="cd18642">
    <property type="entry name" value="CBD_MOF_like"/>
    <property type="match status" value="1"/>
</dbReference>
<dbReference type="CDD" id="cd04301">
    <property type="entry name" value="NAT_SF"/>
    <property type="match status" value="1"/>
</dbReference>
<dbReference type="FunFam" id="1.10.10.10:FF:000022">
    <property type="entry name" value="Histone acetyltransferase"/>
    <property type="match status" value="1"/>
</dbReference>
<dbReference type="FunFam" id="2.30.30.140:FF:000067">
    <property type="entry name" value="Histone acetyltransferase"/>
    <property type="match status" value="1"/>
</dbReference>
<dbReference type="FunFam" id="3.30.60.60:FF:000001">
    <property type="entry name" value="Histone acetyltransferase"/>
    <property type="match status" value="1"/>
</dbReference>
<dbReference type="FunFam" id="3.40.630.30:FF:000002">
    <property type="entry name" value="Histone acetyltransferase"/>
    <property type="match status" value="1"/>
</dbReference>
<dbReference type="Gene3D" id="2.30.30.140">
    <property type="match status" value="1"/>
</dbReference>
<dbReference type="Gene3D" id="3.40.630.30">
    <property type="match status" value="1"/>
</dbReference>
<dbReference type="Gene3D" id="3.30.60.60">
    <property type="entry name" value="N-acetyl transferase-like"/>
    <property type="match status" value="1"/>
</dbReference>
<dbReference type="Gene3D" id="1.10.10.10">
    <property type="entry name" value="Winged helix-like DNA-binding domain superfamily/Winged helix DNA-binding domain"/>
    <property type="match status" value="1"/>
</dbReference>
<dbReference type="InterPro" id="IPR016181">
    <property type="entry name" value="Acyl_CoA_acyltransferase"/>
</dbReference>
<dbReference type="InterPro" id="IPR016197">
    <property type="entry name" value="Chromo-like_dom_sf"/>
</dbReference>
<dbReference type="InterPro" id="IPR000953">
    <property type="entry name" value="Chromo/chromo_shadow_dom"/>
</dbReference>
<dbReference type="InterPro" id="IPR002717">
    <property type="entry name" value="HAT_MYST-type"/>
</dbReference>
<dbReference type="InterPro" id="IPR050603">
    <property type="entry name" value="MYST_HAT"/>
</dbReference>
<dbReference type="InterPro" id="IPR025995">
    <property type="entry name" value="Tudor-knot"/>
</dbReference>
<dbReference type="InterPro" id="IPR036388">
    <property type="entry name" value="WH-like_DNA-bd_sf"/>
</dbReference>
<dbReference type="InterPro" id="IPR040706">
    <property type="entry name" value="Zf-MYST"/>
</dbReference>
<dbReference type="PANTHER" id="PTHR10615">
    <property type="entry name" value="HISTONE ACETYLTRANSFERASE"/>
    <property type="match status" value="1"/>
</dbReference>
<dbReference type="PANTHER" id="PTHR10615:SF161">
    <property type="entry name" value="HISTONE ACETYLTRANSFERASE KAT7"/>
    <property type="match status" value="1"/>
</dbReference>
<dbReference type="Pfam" id="PF01853">
    <property type="entry name" value="MOZ_SAS"/>
    <property type="match status" value="1"/>
</dbReference>
<dbReference type="Pfam" id="PF11717">
    <property type="entry name" value="Tudor-knot"/>
    <property type="match status" value="1"/>
</dbReference>
<dbReference type="Pfam" id="PF17772">
    <property type="entry name" value="zf-MYST"/>
    <property type="match status" value="1"/>
</dbReference>
<dbReference type="SMART" id="SM00298">
    <property type="entry name" value="CHROMO"/>
    <property type="match status" value="1"/>
</dbReference>
<dbReference type="SUPFAM" id="SSF55729">
    <property type="entry name" value="Acyl-CoA N-acyltransferases (Nat)"/>
    <property type="match status" value="1"/>
</dbReference>
<dbReference type="SUPFAM" id="SSF54160">
    <property type="entry name" value="Chromo domain-like"/>
    <property type="match status" value="1"/>
</dbReference>
<dbReference type="PROSITE" id="PS51726">
    <property type="entry name" value="MYST_HAT"/>
    <property type="match status" value="1"/>
</dbReference>
<gene>
    <name evidence="13" type="primary">HAM2</name>
    <name evidence="12" type="synonym">HAG5</name>
    <name evidence="15" type="ordered locus">At5g09740</name>
    <name evidence="17" type="ORF">F17I14.70</name>
    <name evidence="16" type="ORF">MTH16.20</name>
</gene>
<reference key="1">
    <citation type="journal article" date="2000" name="Nature">
        <title>Sequence and analysis of chromosome 5 of the plant Arabidopsis thaliana.</title>
        <authorList>
            <person name="Tabata S."/>
            <person name="Kaneko T."/>
            <person name="Nakamura Y."/>
            <person name="Kotani H."/>
            <person name="Kato T."/>
            <person name="Asamizu E."/>
            <person name="Miyajima N."/>
            <person name="Sasamoto S."/>
            <person name="Kimura T."/>
            <person name="Hosouchi T."/>
            <person name="Kawashima K."/>
            <person name="Kohara M."/>
            <person name="Matsumoto M."/>
            <person name="Matsuno A."/>
            <person name="Muraki A."/>
            <person name="Nakayama S."/>
            <person name="Nakazaki N."/>
            <person name="Naruo K."/>
            <person name="Okumura S."/>
            <person name="Shinpo S."/>
            <person name="Takeuchi C."/>
            <person name="Wada T."/>
            <person name="Watanabe A."/>
            <person name="Yamada M."/>
            <person name="Yasuda M."/>
            <person name="Sato S."/>
            <person name="de la Bastide M."/>
            <person name="Huang E."/>
            <person name="Spiegel L."/>
            <person name="Gnoj L."/>
            <person name="O'Shaughnessy A."/>
            <person name="Preston R."/>
            <person name="Habermann K."/>
            <person name="Murray J."/>
            <person name="Johnson D."/>
            <person name="Rohlfing T."/>
            <person name="Nelson J."/>
            <person name="Stoneking T."/>
            <person name="Pepin K."/>
            <person name="Spieth J."/>
            <person name="Sekhon M."/>
            <person name="Armstrong J."/>
            <person name="Becker M."/>
            <person name="Belter E."/>
            <person name="Cordum H."/>
            <person name="Cordes M."/>
            <person name="Courtney L."/>
            <person name="Courtney W."/>
            <person name="Dante M."/>
            <person name="Du H."/>
            <person name="Edwards J."/>
            <person name="Fryman J."/>
            <person name="Haakensen B."/>
            <person name="Lamar E."/>
            <person name="Latreille P."/>
            <person name="Leonard S."/>
            <person name="Meyer R."/>
            <person name="Mulvaney E."/>
            <person name="Ozersky P."/>
            <person name="Riley A."/>
            <person name="Strowmatt C."/>
            <person name="Wagner-McPherson C."/>
            <person name="Wollam A."/>
            <person name="Yoakum M."/>
            <person name="Bell M."/>
            <person name="Dedhia N."/>
            <person name="Parnell L."/>
            <person name="Shah R."/>
            <person name="Rodriguez M."/>
            <person name="Hoon See L."/>
            <person name="Vil D."/>
            <person name="Baker J."/>
            <person name="Kirchoff K."/>
            <person name="Toth K."/>
            <person name="King L."/>
            <person name="Bahret A."/>
            <person name="Miller B."/>
            <person name="Marra M.A."/>
            <person name="Martienssen R."/>
            <person name="McCombie W.R."/>
            <person name="Wilson R.K."/>
            <person name="Murphy G."/>
            <person name="Bancroft I."/>
            <person name="Volckaert G."/>
            <person name="Wambutt R."/>
            <person name="Duesterhoeft A."/>
            <person name="Stiekema W."/>
            <person name="Pohl T."/>
            <person name="Entian K.-D."/>
            <person name="Terryn N."/>
            <person name="Hartley N."/>
            <person name="Bent E."/>
            <person name="Johnson S."/>
            <person name="Langham S.-A."/>
            <person name="McCullagh B."/>
            <person name="Robben J."/>
            <person name="Grymonprez B."/>
            <person name="Zimmermann W."/>
            <person name="Ramsperger U."/>
            <person name="Wedler H."/>
            <person name="Balke K."/>
            <person name="Wedler E."/>
            <person name="Peters S."/>
            <person name="van Staveren M."/>
            <person name="Dirkse W."/>
            <person name="Mooijman P."/>
            <person name="Klein Lankhorst R."/>
            <person name="Weitzenegger T."/>
            <person name="Bothe G."/>
            <person name="Rose M."/>
            <person name="Hauf J."/>
            <person name="Berneiser S."/>
            <person name="Hempel S."/>
            <person name="Feldpausch M."/>
            <person name="Lamberth S."/>
            <person name="Villarroel R."/>
            <person name="Gielen J."/>
            <person name="Ardiles W."/>
            <person name="Bents O."/>
            <person name="Lemcke K."/>
            <person name="Kolesov G."/>
            <person name="Mayer K.F.X."/>
            <person name="Rudd S."/>
            <person name="Schoof H."/>
            <person name="Schueller C."/>
            <person name="Zaccaria P."/>
            <person name="Mewes H.-W."/>
            <person name="Bevan M."/>
            <person name="Fransz P.F."/>
        </authorList>
    </citation>
    <scope>NUCLEOTIDE SEQUENCE [LARGE SCALE GENOMIC DNA]</scope>
    <source>
        <strain>cv. Columbia</strain>
    </source>
</reference>
<reference key="2">
    <citation type="journal article" date="1999" name="DNA Res.">
        <title>Structural analysis of Arabidopsis thaliana chromosome 5. IX. Sequence features of the regions of 1,011,550 bp covered by seventeen P1 and TAC clones.</title>
        <authorList>
            <person name="Kaneko T."/>
            <person name="Katoh T."/>
            <person name="Sato S."/>
            <person name="Nakamura Y."/>
            <person name="Asamizu E."/>
            <person name="Kotani H."/>
            <person name="Miyajima N."/>
            <person name="Tabata S."/>
        </authorList>
    </citation>
    <scope>NUCLEOTIDE SEQUENCE [LARGE SCALE GENOMIC DNA]</scope>
    <source>
        <strain>cv. Columbia</strain>
    </source>
</reference>
<reference key="3">
    <citation type="journal article" date="2017" name="Plant J.">
        <title>Araport11: a complete reannotation of the Arabidopsis thaliana reference genome.</title>
        <authorList>
            <person name="Cheng C.Y."/>
            <person name="Krishnakumar V."/>
            <person name="Chan A.P."/>
            <person name="Thibaud-Nissen F."/>
            <person name="Schobel S."/>
            <person name="Town C.D."/>
        </authorList>
    </citation>
    <scope>GENOME REANNOTATION</scope>
    <source>
        <strain>cv. Columbia</strain>
    </source>
</reference>
<reference key="4">
    <citation type="journal article" date="2002" name="Science">
        <title>Functional annotation of a full-length Arabidopsis cDNA collection.</title>
        <authorList>
            <person name="Seki M."/>
            <person name="Narusaka M."/>
            <person name="Kamiya A."/>
            <person name="Ishida J."/>
            <person name="Satou M."/>
            <person name="Sakurai T."/>
            <person name="Nakajima M."/>
            <person name="Enju A."/>
            <person name="Akiyama K."/>
            <person name="Oono Y."/>
            <person name="Muramatsu M."/>
            <person name="Hayashizaki Y."/>
            <person name="Kawai J."/>
            <person name="Carninci P."/>
            <person name="Itoh M."/>
            <person name="Ishii Y."/>
            <person name="Arakawa T."/>
            <person name="Shibata K."/>
            <person name="Shinagawa A."/>
            <person name="Shinozaki K."/>
        </authorList>
    </citation>
    <scope>NUCLEOTIDE SEQUENCE [LARGE SCALE MRNA] (ISOFORM 2)</scope>
    <source>
        <strain>cv. Columbia</strain>
    </source>
</reference>
<reference key="5">
    <citation type="submission" date="2002-03" db="EMBL/GenBank/DDBJ databases">
        <title>Full-length cDNA from Arabidopsis thaliana.</title>
        <authorList>
            <person name="Brover V."/>
            <person name="Troukhan M."/>
            <person name="Alexandrov N."/>
            <person name="Lu Y.-P."/>
            <person name="Flavell R."/>
            <person name="Feldmann K.A."/>
        </authorList>
    </citation>
    <scope>NUCLEOTIDE SEQUENCE [LARGE SCALE MRNA] (ISOFORM 1)</scope>
</reference>
<reference key="6">
    <citation type="submission" date="2009-03" db="EMBL/GenBank/DDBJ databases">
        <title>ORF cloning and analysis of Arabidopsis transcription factor genes.</title>
        <authorList>
            <person name="Fujita M."/>
            <person name="Mizukado S."/>
            <person name="Seki M."/>
            <person name="Shinozaki K."/>
            <person name="Mitsuda N."/>
            <person name="Takiguchi Y."/>
            <person name="Takagi M."/>
        </authorList>
    </citation>
    <scope>NUCLEOTIDE SEQUENCE [LARGE SCALE MRNA] (ISOFORM 1)</scope>
</reference>
<reference key="7">
    <citation type="journal article" date="2002" name="Nucleic Acids Res.">
        <title>Analysis of histone acetyltransferase and histone deacetylase families of Arabidopsis thaliana suggests functional diversification of chromatin modification among multicellular eukaryotes.</title>
        <authorList>
            <person name="Pandey R."/>
            <person name="Mueller A."/>
            <person name="Napoli C.A."/>
            <person name="Selinger D.A."/>
            <person name="Pikaard C.S."/>
            <person name="Richards E.J."/>
            <person name="Bender J."/>
            <person name="Mount D.W."/>
            <person name="Jorgensen R.A."/>
        </authorList>
    </citation>
    <scope>IDENTIFICATION</scope>
    <scope>NOMENCLATURE</scope>
</reference>
<reference key="8">
    <citation type="journal article" date="2006" name="Genes Dev.">
        <title>Erasure of histone acetylation by Arabidopsis HDA6 mediates large-scale gene silencing in nucleolar dominance.</title>
        <authorList>
            <person name="Earley K."/>
            <person name="Lawrence R.J."/>
            <person name="Pontes O."/>
            <person name="Reuther R."/>
            <person name="Enciso A.J."/>
            <person name="Silva M."/>
            <person name="Neves N."/>
            <person name="Gross M."/>
            <person name="Viegas W."/>
            <person name="Pikaard C.S."/>
        </authorList>
    </citation>
    <scope>FUNCTION</scope>
</reference>
<reference key="9">
    <citation type="journal article" date="2007" name="Plant J.">
        <title>In vitro specificities of Arabidopsis co-activator histone acetyltransferases: implications for histone hyperacetylation in gene activation.</title>
        <authorList>
            <person name="Earley K.W."/>
            <person name="Shook M.S."/>
            <person name="Brower-Toland B."/>
            <person name="Hicks L."/>
            <person name="Pikaard C.S."/>
        </authorList>
    </citation>
    <scope>FUNCTION</scope>
    <scope>SUBCELLULAR LOCATION</scope>
</reference>
<reference key="10">
    <citation type="journal article" date="2008" name="BMC Plant Biol.">
        <title>The MYST histone acetyltransferases are essential for gametophyte development in Arabidopsis.</title>
        <authorList>
            <person name="Latrasse D."/>
            <person name="Benhamed M."/>
            <person name="Henry Y."/>
            <person name="Domenichini S."/>
            <person name="Kim W."/>
            <person name="Zhou D.X."/>
            <person name="Delarue M."/>
        </authorList>
    </citation>
    <scope>FUNCTION</scope>
    <scope>DISRUPTION PHENOTYPE</scope>
    <scope>TISSUE SPECIFICITY</scope>
</reference>
<reference key="11">
    <citation type="journal article" date="2012" name="Plant Physiol.">
        <title>Participation of chromatin-remodeling proteins in the repair of ultraviolet-B-damaged DNA.</title>
        <authorList>
            <person name="Campi M."/>
            <person name="D'Andrea L."/>
            <person name="Emiliani J."/>
            <person name="Casati P."/>
        </authorList>
    </citation>
    <scope>INDUCTION BY UV</scope>
</reference>
<reference key="12">
    <citation type="journal article" date="2013" name="J. Plant Physiol.">
        <title>Requirement of histone acetyltransferases HAM1 and HAM2 for epigenetic modification of FLC in regulating flowering in Arabidopsis.</title>
        <authorList>
            <person name="Xiao J."/>
            <person name="Zhang H."/>
            <person name="Xing L."/>
            <person name="Xu S."/>
            <person name="Liu H."/>
            <person name="Chong K."/>
            <person name="Xu Y."/>
        </authorList>
    </citation>
    <scope>FUNCTION</scope>
    <scope>TISSUE SPECIFICITY</scope>
</reference>
<reference key="13">
    <citation type="journal article" date="2014" name="Nucleic Acids Res.">
        <title>Arabidopsis MRG domain proteins bridge two histone modifications to elevate expression of flowering genes.</title>
        <authorList>
            <person name="Xu Y."/>
            <person name="Gan E.S."/>
            <person name="Zhou J."/>
            <person name="Wee W.Y."/>
            <person name="Zhang X."/>
            <person name="Ito T."/>
        </authorList>
    </citation>
    <scope>INTERACTION WITH MRG1 AND MRG2</scope>
    <source>
        <strain>cv. Columbia</strain>
    </source>
</reference>
<sequence length="445" mass="51367">MGSSANTETNGNAPPPSSNQKPPATNGVDGSHPPPPPLTPDQAIIESDPSKKRKMGMLPLEVGTRVMCRWRDGKHHPVKVIERRRIHNGGQNDYEYYVHYTEFNRRLDEWTQLDQLDLDSVECAVDEKVEDKVTSLKMTRHQKRKIDETHIEGHEELDAASLREHEEFTKVKNISTIELGKYEIETWYFSPFPPEYNDCVKLFFCEFCLNFMKRKEQLQRHMRKCDLKHPPGDEIYRSGTLSMFEVDGKKNKVYAQNLCYLAKLFLDHKTLYYDVDLFLFYVLCECDDRGCHMVGYFSKEKHSEEAYNLACILTLPSYQRKGYGKFLIAFSYELSKKEGKVGTPERPLSDLGLLSYRGYWTRVLLEILKKHKGNISIKELSDVTAIKAEDILSTLQSLELIQYRKGQHVICADPKVLDRHLKAAGRGGLDVDASKLIWTPYKDQS</sequence>
<keyword id="KW-0007">Acetylation</keyword>
<keyword id="KW-0010">Activator</keyword>
<keyword id="KW-0012">Acyltransferase</keyword>
<keyword id="KW-0025">Alternative splicing</keyword>
<keyword id="KW-0156">Chromatin regulator</keyword>
<keyword id="KW-0479">Metal-binding</keyword>
<keyword id="KW-0539">Nucleus</keyword>
<keyword id="KW-1185">Reference proteome</keyword>
<keyword id="KW-0804">Transcription</keyword>
<keyword id="KW-0805">Transcription regulation</keyword>
<keyword id="KW-0808">Transferase</keyword>
<keyword id="KW-0862">Zinc</keyword>
<keyword id="KW-0863">Zinc-finger</keyword>
<comment type="function">
    <text evidence="5 6 7 9">Histone acetyltransferase which may be involved in transcriptional activation. Acetylates 'Lys-5' of histone H4 (H4K5ac) (PubMed:16648464, PubMed:17877703). Essential for gametophyte development (PubMed:19040736). Negative regulator of flowering controlling the H4K5ac levels in the FLC chromatin (PubMed:23273925).</text>
</comment>
<comment type="catalytic activity">
    <reaction evidence="5">
        <text>L-lysyl-[protein] + acetyl-CoA = N(6)-acetyl-L-lysyl-[protein] + CoA + H(+)</text>
        <dbReference type="Rhea" id="RHEA:45948"/>
        <dbReference type="Rhea" id="RHEA-COMP:9752"/>
        <dbReference type="Rhea" id="RHEA-COMP:10731"/>
        <dbReference type="ChEBI" id="CHEBI:15378"/>
        <dbReference type="ChEBI" id="CHEBI:29969"/>
        <dbReference type="ChEBI" id="CHEBI:57287"/>
        <dbReference type="ChEBI" id="CHEBI:57288"/>
        <dbReference type="ChEBI" id="CHEBI:61930"/>
        <dbReference type="EC" id="2.3.1.48"/>
    </reaction>
</comment>
<comment type="subunit">
    <text evidence="10">Interacts with MRG1 and MRG2.</text>
</comment>
<comment type="subcellular location">
    <subcellularLocation>
        <location evidence="6">Nucleus</location>
    </subcellularLocation>
</comment>
<comment type="alternative products">
    <event type="alternative splicing"/>
    <isoform>
        <id>Q9LXD7-1</id>
        <name>1</name>
        <sequence type="displayed"/>
    </isoform>
    <isoform>
        <id>Q9LXD7-2</id>
        <name>2</name>
        <sequence type="described" ref="VSP_018609 VSP_018610"/>
    </isoform>
</comment>
<comment type="tissue specificity">
    <text evidence="7 9">Expressed in cotyledons, leaves, stems, roots and, at higher levels in developing flowers, particularly in the anthers and gynoecia (PubMed:19040736). Constitutively expressed in all tissues, predominantly in shoot apical meristem (PubMed:23273925).</text>
</comment>
<comment type="induction">
    <text evidence="8">Up-regulated upon UV-B exposure.</text>
</comment>
<comment type="PTM">
    <text evidence="1">Autoacetylation at Lys-269 is required for proper function.</text>
</comment>
<comment type="disruption phenotype">
    <text evidence="7">No visible phenotype, due to the redundancy with HAM1. Ham1 and ham2 double mutants are lethal.</text>
</comment>
<comment type="miscellaneous">
    <text evidence="9">Knockdown expression of both HAM1 and HAM2 results in earlier flowering.</text>
</comment>
<comment type="similarity">
    <text evidence="14">Belongs to the MYST (SAS/MOZ) family.</text>
</comment>
<evidence type="ECO:0000250" key="1">
    <source>
        <dbReference type="UniProtKB" id="Q9H7Z6"/>
    </source>
</evidence>
<evidence type="ECO:0000255" key="2"/>
<evidence type="ECO:0000255" key="3">
    <source>
        <dbReference type="PROSITE-ProRule" id="PRU01063"/>
    </source>
</evidence>
<evidence type="ECO:0000256" key="4">
    <source>
        <dbReference type="SAM" id="MobiDB-lite"/>
    </source>
</evidence>
<evidence type="ECO:0000269" key="5">
    <source>
    </source>
</evidence>
<evidence type="ECO:0000269" key="6">
    <source>
    </source>
</evidence>
<evidence type="ECO:0000269" key="7">
    <source>
    </source>
</evidence>
<evidence type="ECO:0000269" key="8">
    <source>
    </source>
</evidence>
<evidence type="ECO:0000269" key="9">
    <source>
    </source>
</evidence>
<evidence type="ECO:0000269" key="10">
    <source>
    </source>
</evidence>
<evidence type="ECO:0000303" key="11">
    <source>
    </source>
</evidence>
<evidence type="ECO:0000303" key="12">
    <source>
    </source>
</evidence>
<evidence type="ECO:0000303" key="13">
    <source>
    </source>
</evidence>
<evidence type="ECO:0000305" key="14"/>
<evidence type="ECO:0000312" key="15">
    <source>
        <dbReference type="Araport" id="AT5G09740"/>
    </source>
</evidence>
<evidence type="ECO:0000312" key="16">
    <source>
        <dbReference type="EMBL" id="BAB09532.1"/>
    </source>
</evidence>
<evidence type="ECO:0000312" key="17">
    <source>
        <dbReference type="EMBL" id="CAB89356.1"/>
    </source>
</evidence>
<name>MYST2_ARATH</name>